<name>ATG28_GIBZE</name>
<keyword id="KW-0072">Autophagy</keyword>
<keyword id="KW-0175">Coiled coil</keyword>
<keyword id="KW-0963">Cytoplasm</keyword>
<keyword id="KW-0968">Cytoplasmic vesicle</keyword>
<keyword id="KW-0472">Membrane</keyword>
<keyword id="KW-1185">Reference proteome</keyword>
<keyword id="KW-0926">Vacuole</keyword>
<dbReference type="EMBL" id="HG970335">
    <property type="protein sequence ID" value="CEF85081.1"/>
    <property type="molecule type" value="Genomic_DNA"/>
</dbReference>
<dbReference type="SMR" id="A0A098DT87"/>
<dbReference type="STRING" id="229533.A0A098DT87"/>
<dbReference type="VEuPathDB" id="FungiDB:FGRAMPH1_01G25019"/>
<dbReference type="eggNOG" id="ENOG502SANW">
    <property type="taxonomic scope" value="Eukaryota"/>
</dbReference>
<dbReference type="InParanoid" id="A0A098DT87"/>
<dbReference type="Proteomes" id="UP000070720">
    <property type="component" value="Chromosome 4"/>
</dbReference>
<dbReference type="GO" id="GO:0030659">
    <property type="term" value="C:cytoplasmic vesicle membrane"/>
    <property type="evidence" value="ECO:0007669"/>
    <property type="project" value="UniProtKB-SubCell"/>
</dbReference>
<dbReference type="GO" id="GO:0005774">
    <property type="term" value="C:vacuolar membrane"/>
    <property type="evidence" value="ECO:0007669"/>
    <property type="project" value="UniProtKB-SubCell"/>
</dbReference>
<dbReference type="GO" id="GO:0006914">
    <property type="term" value="P:autophagy"/>
    <property type="evidence" value="ECO:0007669"/>
    <property type="project" value="UniProtKB-KW"/>
</dbReference>
<feature type="chain" id="PRO_0000443862" description="Autophagy-related protein 28">
    <location>
        <begin position="1"/>
        <end position="646"/>
    </location>
</feature>
<feature type="region of interest" description="Disordered" evidence="3">
    <location>
        <begin position="1"/>
        <end position="148"/>
    </location>
</feature>
<feature type="region of interest" description="Disordered" evidence="3">
    <location>
        <begin position="221"/>
        <end position="245"/>
    </location>
</feature>
<feature type="region of interest" description="Disordered" evidence="3">
    <location>
        <begin position="475"/>
        <end position="494"/>
    </location>
</feature>
<feature type="region of interest" description="Disordered" evidence="3">
    <location>
        <begin position="546"/>
        <end position="612"/>
    </location>
</feature>
<feature type="coiled-coil region" evidence="2">
    <location>
        <begin position="283"/>
        <end position="350"/>
    </location>
</feature>
<feature type="coiled-coil region" evidence="2">
    <location>
        <begin position="485"/>
        <end position="514"/>
    </location>
</feature>
<feature type="compositionally biased region" description="Polar residues" evidence="3">
    <location>
        <begin position="12"/>
        <end position="21"/>
    </location>
</feature>
<feature type="compositionally biased region" description="Low complexity" evidence="3">
    <location>
        <begin position="63"/>
        <end position="75"/>
    </location>
</feature>
<feature type="compositionally biased region" description="Polar residues" evidence="3">
    <location>
        <begin position="106"/>
        <end position="122"/>
    </location>
</feature>
<feature type="compositionally biased region" description="Basic and acidic residues" evidence="3">
    <location>
        <begin position="557"/>
        <end position="575"/>
    </location>
</feature>
<feature type="compositionally biased region" description="Basic and acidic residues" evidence="3">
    <location>
        <begin position="588"/>
        <end position="597"/>
    </location>
</feature>
<gene>
    <name evidence="5" type="primary">ATG28</name>
    <name type="ORF">FG07526</name>
    <name type="ORF">FGRAMPH1_01T25019</name>
</gene>
<evidence type="ECO:0000250" key="1">
    <source>
        <dbReference type="UniProtKB" id="C4R159"/>
    </source>
</evidence>
<evidence type="ECO:0000255" key="2"/>
<evidence type="ECO:0000256" key="3">
    <source>
        <dbReference type="SAM" id="MobiDB-lite"/>
    </source>
</evidence>
<evidence type="ECO:0000269" key="4">
    <source>
    </source>
</evidence>
<evidence type="ECO:0000303" key="5">
    <source>
    </source>
</evidence>
<evidence type="ECO:0000305" key="6"/>
<comment type="function">
    <text evidence="1">Required for the autophagic degradation of peroxisomes called pexophagy, but not essential for general autophagy (By similarity). Involved in resistance to elevated pH (By similarity).</text>
</comment>
<comment type="subcellular location">
    <subcellularLocation>
        <location evidence="1">Cytoplasm</location>
    </subcellularLocation>
    <subcellularLocation>
        <location evidence="1">Vacuole membrane</location>
        <topology evidence="1">Peripheral membrane protein</topology>
    </subcellularLocation>
    <subcellularLocation>
        <location evidence="1">Cytoplasmic vesicle membrane</location>
        <topology evidence="1">Peripheral membrane protein</topology>
    </subcellularLocation>
    <text evidence="1">Concentration increases at the vacuolar and cytoplasmic vesicular membranes during the course of pexophagy (By similarity).</text>
</comment>
<comment type="disruption phenotype">
    <text evidence="4">Does not significantly decrease the growth rate under nutrient-rich conditions (PubMed:28894236).</text>
</comment>
<comment type="similarity">
    <text evidence="6">Belongs to the ATG28 family.</text>
</comment>
<proteinExistence type="inferred from homology"/>
<accession>A0A098DT87</accession>
<accession>A0A0E0SF68</accession>
<protein>
    <recommendedName>
        <fullName evidence="5">Autophagy-related protein 28</fullName>
    </recommendedName>
</protein>
<organism>
    <name type="scientific">Gibberella zeae (strain ATCC MYA-4620 / CBS 123657 / FGSC 9075 / NRRL 31084 / PH-1)</name>
    <name type="common">Wheat head blight fungus</name>
    <name type="synonym">Fusarium graminearum</name>
    <dbReference type="NCBI Taxonomy" id="229533"/>
    <lineage>
        <taxon>Eukaryota</taxon>
        <taxon>Fungi</taxon>
        <taxon>Dikarya</taxon>
        <taxon>Ascomycota</taxon>
        <taxon>Pezizomycotina</taxon>
        <taxon>Sordariomycetes</taxon>
        <taxon>Hypocreomycetidae</taxon>
        <taxon>Hypocreales</taxon>
        <taxon>Nectriaceae</taxon>
        <taxon>Fusarium</taxon>
    </lineage>
</organism>
<sequence length="646" mass="72220">MSSPSMFDRISSPRQRLSNPLRSPPIREVSEYDLDELEPRSDDVLFDQEPPLPRLKKNMQHVSATSTRRSSSPASWDSKHRYSNSPPHTRSKPIFAGPPPPIASSMMMNQHPSRQSTVSSHGDNGRGYGLISASRFGSNSPSQKHVDNRPRLDSIWRSLQRREKALERDIQQLLDLQASGLIAGSGEGSESNFGSDTTTGESTFYSTATSKSRMMNSLHMPTRSTPDGNVIPVRQPVSNKPRGLKSTRVGLQRSMAALSDLKAEEDLHLSTALEQRKDALAYLDKMSKRRDDIYSELHALEDDEEEPLGQELRSLEAERQELDHDIQRLEEKLAGAKKRRRWVREKMEDVKGRREAGLSGYRAAGRDVDIEVRTLMQTPPIAPLDIDALGYGENTRPKENMDILRGTEFLQLRPERRTVEMARTWWQGEIAALERRKAQISQDRQALIEGSEVWSDVTGLVAQFEAKLRELVKSSQAGDADEEPQQAAMQSQLSEMDDVVQELQKRLQLAESKHWNLLICAIGAELEAFVEAKALLSDTLGLPEPAAAVDSPELSDSTDKAEGTSQEERADSHDESDNEVPADLLVSRMEDHDHDPPDSPQQQSVVLRRGSAGNNEVPVEFLADLHGPNKIEQDTEIAAVTRLMSK</sequence>
<reference key="1">
    <citation type="journal article" date="2007" name="Science">
        <title>The Fusarium graminearum genome reveals a link between localized polymorphism and pathogen specialization.</title>
        <authorList>
            <person name="Cuomo C.A."/>
            <person name="Gueldener U."/>
            <person name="Xu J.-R."/>
            <person name="Trail F."/>
            <person name="Turgeon B.G."/>
            <person name="Di Pietro A."/>
            <person name="Walton J.D."/>
            <person name="Ma L.-J."/>
            <person name="Baker S.E."/>
            <person name="Rep M."/>
            <person name="Adam G."/>
            <person name="Antoniw J."/>
            <person name="Baldwin T."/>
            <person name="Calvo S.E."/>
            <person name="Chang Y.-L."/>
            <person name="DeCaprio D."/>
            <person name="Gale L.R."/>
            <person name="Gnerre S."/>
            <person name="Goswami R.S."/>
            <person name="Hammond-Kosack K."/>
            <person name="Harris L.J."/>
            <person name="Hilburn K."/>
            <person name="Kennell J.C."/>
            <person name="Kroken S."/>
            <person name="Magnuson J.K."/>
            <person name="Mannhaupt G."/>
            <person name="Mauceli E.W."/>
            <person name="Mewes H.-W."/>
            <person name="Mitterbauer R."/>
            <person name="Muehlbauer G."/>
            <person name="Muensterkoetter M."/>
            <person name="Nelson D."/>
            <person name="O'Donnell K."/>
            <person name="Ouellet T."/>
            <person name="Qi W."/>
            <person name="Quesneville H."/>
            <person name="Roncero M.I.G."/>
            <person name="Seong K.-Y."/>
            <person name="Tetko I.V."/>
            <person name="Urban M."/>
            <person name="Waalwijk C."/>
            <person name="Ward T.J."/>
            <person name="Yao J."/>
            <person name="Birren B.W."/>
            <person name="Kistler H.C."/>
        </authorList>
    </citation>
    <scope>NUCLEOTIDE SEQUENCE [LARGE SCALE GENOMIC DNA]</scope>
    <source>
        <strain>ATCC MYA-4620 / CBS 123657 / FGSC 9075 / NRRL 31084 / PH-1</strain>
    </source>
</reference>
<reference key="2">
    <citation type="journal article" date="2010" name="Nature">
        <title>Comparative genomics reveals mobile pathogenicity chromosomes in Fusarium.</title>
        <authorList>
            <person name="Ma L.-J."/>
            <person name="van der Does H.C."/>
            <person name="Borkovich K.A."/>
            <person name="Coleman J.J."/>
            <person name="Daboussi M.-J."/>
            <person name="Di Pietro A."/>
            <person name="Dufresne M."/>
            <person name="Freitag M."/>
            <person name="Grabherr M."/>
            <person name="Henrissat B."/>
            <person name="Houterman P.M."/>
            <person name="Kang S."/>
            <person name="Shim W.-B."/>
            <person name="Woloshuk C."/>
            <person name="Xie X."/>
            <person name="Xu J.-R."/>
            <person name="Antoniw J."/>
            <person name="Baker S.E."/>
            <person name="Bluhm B.H."/>
            <person name="Breakspear A."/>
            <person name="Brown D.W."/>
            <person name="Butchko R.A.E."/>
            <person name="Chapman S."/>
            <person name="Coulson R."/>
            <person name="Coutinho P.M."/>
            <person name="Danchin E.G.J."/>
            <person name="Diener A."/>
            <person name="Gale L.R."/>
            <person name="Gardiner D.M."/>
            <person name="Goff S."/>
            <person name="Hammond-Kosack K.E."/>
            <person name="Hilburn K."/>
            <person name="Hua-Van A."/>
            <person name="Jonkers W."/>
            <person name="Kazan K."/>
            <person name="Kodira C.D."/>
            <person name="Koehrsen M."/>
            <person name="Kumar L."/>
            <person name="Lee Y.-H."/>
            <person name="Li L."/>
            <person name="Manners J.M."/>
            <person name="Miranda-Saavedra D."/>
            <person name="Mukherjee M."/>
            <person name="Park G."/>
            <person name="Park J."/>
            <person name="Park S.-Y."/>
            <person name="Proctor R.H."/>
            <person name="Regev A."/>
            <person name="Ruiz-Roldan M.C."/>
            <person name="Sain D."/>
            <person name="Sakthikumar S."/>
            <person name="Sykes S."/>
            <person name="Schwartz D.C."/>
            <person name="Turgeon B.G."/>
            <person name="Wapinski I."/>
            <person name="Yoder O."/>
            <person name="Young S."/>
            <person name="Zeng Q."/>
            <person name="Zhou S."/>
            <person name="Galagan J."/>
            <person name="Cuomo C.A."/>
            <person name="Kistler H.C."/>
            <person name="Rep M."/>
        </authorList>
    </citation>
    <scope>GENOME REANNOTATION</scope>
    <source>
        <strain>ATCC MYA-4620 / CBS 123657 / FGSC 9075 / NRRL 31084 / PH-1</strain>
    </source>
</reference>
<reference key="3">
    <citation type="journal article" date="2015" name="BMC Genomics">
        <title>The completed genome sequence of the pathogenic ascomycete fungus Fusarium graminearum.</title>
        <authorList>
            <person name="King R."/>
            <person name="Urban M."/>
            <person name="Hammond-Kosack M.C.U."/>
            <person name="Hassani-Pak K."/>
            <person name="Hammond-Kosack K.E."/>
        </authorList>
    </citation>
    <scope>NUCLEOTIDE SEQUENCE [LARGE SCALE GENOMIC DNA]</scope>
    <source>
        <strain>ATCC MYA-4620 / CBS 123657 / FGSC 9075 / NRRL 31084 / PH-1</strain>
    </source>
</reference>
<reference key="4">
    <citation type="journal article" date="2017" name="Sci. Rep.">
        <title>Genome-wide functional analysis reveals that autophagy is necessary for growth, sporulation, deoxynivalenol production and virulence in Fusarium graminearum.</title>
        <authorList>
            <person name="Lv W."/>
            <person name="Wang C."/>
            <person name="Yang N."/>
            <person name="Que Y."/>
            <person name="Talbot N.J."/>
            <person name="Wang Z."/>
        </authorList>
    </citation>
    <scope>IDENTIFICATION</scope>
    <scope>DISRUPTION PHENOTYPE</scope>
</reference>